<reference key="1">
    <citation type="submission" date="2006-06" db="EMBL/GenBank/DDBJ databases">
        <authorList>
            <consortium name="Sanger Xenopus tropicalis EST/cDNA project"/>
        </authorList>
    </citation>
    <scope>NUCLEOTIDE SEQUENCE [LARGE SCALE MRNA]</scope>
    <source>
        <tissue>Neurula</tissue>
    </source>
</reference>
<keyword id="KW-0256">Endoplasmic reticulum</keyword>
<keyword id="KW-0444">Lipid biosynthesis</keyword>
<keyword id="KW-0443">Lipid metabolism</keyword>
<keyword id="KW-0472">Membrane</keyword>
<keyword id="KW-0521">NADP</keyword>
<keyword id="KW-0560">Oxidoreductase</keyword>
<keyword id="KW-1185">Reference proteome</keyword>
<keyword id="KW-0752">Steroid biosynthesis</keyword>
<keyword id="KW-0812">Transmembrane</keyword>
<keyword id="KW-1133">Transmembrane helix</keyword>
<comment type="function">
    <text evidence="2">Catalyzes the second of the four reactions of the long-chain fatty acids elongation cycle. This endoplasmic reticulum-bound enzymatic process, allows the addition of two carbons to the chain of long- and very long-chain fatty acids/VLCFAs per cycle. This enzyme has a 3-ketoacyl-CoA reductase activity, reducing 3-ketoacyl-CoA to 3-hydroxyacyl-CoA, within each cycle of fatty acid elongation. Thereby, it may participate in the production of VLCFAs of different chain lengths that are involved in multiple biological processes as precursors of membrane lipids and lipid mediators. May also catalyze the transformation of estrone (E1) into estradiol (E2) and play a role in estrogen formation.</text>
</comment>
<comment type="catalytic activity">
    <reaction evidence="2">
        <text>a very-long-chain (3R)-3-hydroxyacyl-CoA + NADP(+) = a very-long-chain 3-oxoacyl-CoA + NADPH + H(+)</text>
        <dbReference type="Rhea" id="RHEA:48680"/>
        <dbReference type="ChEBI" id="CHEBI:15378"/>
        <dbReference type="ChEBI" id="CHEBI:57783"/>
        <dbReference type="ChEBI" id="CHEBI:58349"/>
        <dbReference type="ChEBI" id="CHEBI:85440"/>
        <dbReference type="ChEBI" id="CHEBI:90725"/>
        <dbReference type="EC" id="1.1.1.330"/>
    </reaction>
</comment>
<comment type="catalytic activity">
    <reaction evidence="2">
        <text>17beta-estradiol + NAD(+) = estrone + NADH + H(+)</text>
        <dbReference type="Rhea" id="RHEA:24612"/>
        <dbReference type="ChEBI" id="CHEBI:15378"/>
        <dbReference type="ChEBI" id="CHEBI:16469"/>
        <dbReference type="ChEBI" id="CHEBI:17263"/>
        <dbReference type="ChEBI" id="CHEBI:57540"/>
        <dbReference type="ChEBI" id="CHEBI:57945"/>
        <dbReference type="EC" id="1.1.1.62"/>
    </reaction>
</comment>
<comment type="catalytic activity">
    <reaction evidence="2">
        <text>17beta-estradiol + NADP(+) = estrone + NADPH + H(+)</text>
        <dbReference type="Rhea" id="RHEA:24616"/>
        <dbReference type="ChEBI" id="CHEBI:15378"/>
        <dbReference type="ChEBI" id="CHEBI:16469"/>
        <dbReference type="ChEBI" id="CHEBI:17263"/>
        <dbReference type="ChEBI" id="CHEBI:57783"/>
        <dbReference type="ChEBI" id="CHEBI:58349"/>
        <dbReference type="EC" id="1.1.1.62"/>
    </reaction>
</comment>
<comment type="catalytic activity">
    <reaction evidence="2">
        <text>3-oxooctadecanoyl-CoA + NADPH + H(+) = (3R)-hydroxyoctadecanoyl-CoA + NADP(+)</text>
        <dbReference type="Rhea" id="RHEA:39151"/>
        <dbReference type="ChEBI" id="CHEBI:15378"/>
        <dbReference type="ChEBI" id="CHEBI:57783"/>
        <dbReference type="ChEBI" id="CHEBI:58349"/>
        <dbReference type="ChEBI" id="CHEBI:71407"/>
        <dbReference type="ChEBI" id="CHEBI:76374"/>
    </reaction>
</comment>
<comment type="catalytic activity">
    <reaction evidence="2">
        <text>(7Z,10Z,13Z,16Z)-3-oxodocosatetraenoyl-CoA + NADPH + H(+) = (3R)-hydroxy-(7Z,10Z,13Z,16Z)-docosatetraenoyl-CoA + NADP(+)</text>
        <dbReference type="Rhea" id="RHEA:39323"/>
        <dbReference type="ChEBI" id="CHEBI:15378"/>
        <dbReference type="ChEBI" id="CHEBI:57783"/>
        <dbReference type="ChEBI" id="CHEBI:58349"/>
        <dbReference type="ChEBI" id="CHEBI:73852"/>
        <dbReference type="ChEBI" id="CHEBI:76415"/>
    </reaction>
</comment>
<comment type="catalytic activity">
    <reaction evidence="2">
        <text>3-oxo-(7Z,10Z,13Z,16Z,19Z)-docosapentaenoyl-CoA + NADPH + H(+) = (3R)-hydroxy-(7Z,10Z,13Z,16Z,19Z)-docosapentaenoyl-CoA + NADP(+)</text>
        <dbReference type="Rhea" id="RHEA:39459"/>
        <dbReference type="ChEBI" id="CHEBI:15378"/>
        <dbReference type="ChEBI" id="CHEBI:57783"/>
        <dbReference type="ChEBI" id="CHEBI:58349"/>
        <dbReference type="ChEBI" id="CHEBI:73863"/>
        <dbReference type="ChEBI" id="CHEBI:76460"/>
    </reaction>
</comment>
<comment type="catalytic activity">
    <reaction evidence="2">
        <text>(8Z,11Z,14Z)-3-oxoeicosatrienoyl-CoA + NADPH + H(+) = (3R)-hydroxy-(8Z,11Z,14Z)-eicosatrienoyl-CoA + NADP(+)</text>
        <dbReference type="Rhea" id="RHEA:39311"/>
        <dbReference type="ChEBI" id="CHEBI:15378"/>
        <dbReference type="ChEBI" id="CHEBI:57783"/>
        <dbReference type="ChEBI" id="CHEBI:58349"/>
        <dbReference type="ChEBI" id="CHEBI:71481"/>
        <dbReference type="ChEBI" id="CHEBI:76411"/>
    </reaction>
</comment>
<comment type="pathway">
    <text evidence="2">Lipid metabolism; fatty acid biosynthesis.</text>
</comment>
<comment type="pathway">
    <text evidence="2">Steroid biosynthesis; estrogen biosynthesis.</text>
</comment>
<comment type="subcellular location">
    <subcellularLocation>
        <location evidence="2">Endoplasmic reticulum membrane</location>
        <topology evidence="2">Multi-pass membrane protein</topology>
    </subcellularLocation>
</comment>
<comment type="similarity">
    <text evidence="5">Belongs to the short-chain dehydrogenases/reductases (SDR) family. 17-beta-HSD 3 subfamily.</text>
</comment>
<protein>
    <recommendedName>
        <fullName evidence="5">Very-long-chain 3-oxoacyl-CoA reductase</fullName>
        <ecNumber evidence="2">1.1.1.330</ecNumber>
    </recommendedName>
    <alternativeName>
        <fullName evidence="2">17-beta-hydroxysteroid dehydrogenase 12</fullName>
        <shortName evidence="2">17-beta-HSD 12</shortName>
    </alternativeName>
    <alternativeName>
        <fullName evidence="2">3-ketoacyl-CoA reductase</fullName>
        <shortName evidence="2">KAR</shortName>
    </alternativeName>
    <alternativeName>
        <fullName evidence="2">Estradiol 17-beta-dehydrogenase 12</fullName>
        <ecNumber evidence="2">1.1.1.62</ecNumber>
    </alternativeName>
</protein>
<sequence>MATESLAEVPVPGCNCFWYLGVVAAVWWGLRAAWCLLDGARVWVLGSGAQVGPRIGKWAVVTGATDGIGKAYAEELAKRGMNIVLISRSPEKLEEVAKQIKEKFKVETKIIAADFGKPTEIYGRIESGLRDLEIGVLVNNVGVSYEHPEYFLEIPDLENTLDKMININITSVCQMTRLVLPGMLGRGRGVILNISSASGMYPVPLLTVYSATKAFVDFFSRGLQAEYRSKGVTVQSVLPFYVATKLAKIRKPTWDKPSPETYVQSALNTVGLQTQTNGYLPHAIMGWISTSLVPVSTAISLGMKMNKGLRARFLKRAKQK</sequence>
<proteinExistence type="evidence at transcript level"/>
<feature type="chain" id="PRO_0000248375" description="Very-long-chain 3-oxoacyl-CoA reductase">
    <location>
        <begin position="1"/>
        <end position="320"/>
    </location>
</feature>
<feature type="transmembrane region" description="Helical" evidence="3">
    <location>
        <begin position="17"/>
        <end position="37"/>
    </location>
</feature>
<feature type="transmembrane region" description="Helical" evidence="3">
    <location>
        <begin position="189"/>
        <end position="209"/>
    </location>
</feature>
<feature type="transmembrane region" description="Helical" evidence="3">
    <location>
        <begin position="283"/>
        <end position="303"/>
    </location>
</feature>
<feature type="active site" description="Proton acceptor" evidence="4">
    <location>
        <position position="209"/>
    </location>
</feature>
<feature type="binding site" evidence="1">
    <location>
        <begin position="56"/>
        <end position="85"/>
    </location>
    <ligand>
        <name>NADP(+)</name>
        <dbReference type="ChEBI" id="CHEBI:58349"/>
    </ligand>
</feature>
<feature type="binding site" evidence="1">
    <location>
        <position position="196"/>
    </location>
    <ligand>
        <name>substrate</name>
    </ligand>
</feature>
<dbReference type="EC" id="1.1.1.330" evidence="2"/>
<dbReference type="EC" id="1.1.1.62" evidence="2"/>
<dbReference type="EMBL" id="CR760225">
    <property type="protein sequence ID" value="CAJ83357.1"/>
    <property type="molecule type" value="mRNA"/>
</dbReference>
<dbReference type="RefSeq" id="NP_001017234.1">
    <property type="nucleotide sequence ID" value="NM_001017234.2"/>
</dbReference>
<dbReference type="SMR" id="Q28IU1"/>
<dbReference type="FunCoup" id="Q28IU1">
    <property type="interactions" value="1890"/>
</dbReference>
<dbReference type="STRING" id="8364.ENSXETP00000017411"/>
<dbReference type="PaxDb" id="8364-ENSXETP00000048094"/>
<dbReference type="GeneID" id="549988"/>
<dbReference type="KEGG" id="xtr:549988"/>
<dbReference type="AGR" id="Xenbase:XB-GENE-945229"/>
<dbReference type="CTD" id="51144"/>
<dbReference type="Xenbase" id="XB-GENE-945229">
    <property type="gene designation" value="hsd17b12"/>
</dbReference>
<dbReference type="eggNOG" id="KOG1014">
    <property type="taxonomic scope" value="Eukaryota"/>
</dbReference>
<dbReference type="HOGENOM" id="CLU_010194_38_0_1"/>
<dbReference type="InParanoid" id="Q28IU1"/>
<dbReference type="OMA" id="LVAPGMM"/>
<dbReference type="OrthoDB" id="5545019at2759"/>
<dbReference type="PhylomeDB" id="Q28IU1"/>
<dbReference type="TreeFam" id="TF314591"/>
<dbReference type="Reactome" id="R-XTR-75876">
    <property type="pathway name" value="Synthesis of very long-chain fatty acyl-CoAs"/>
</dbReference>
<dbReference type="UniPathway" id="UPA00094"/>
<dbReference type="UniPathway" id="UPA00769"/>
<dbReference type="Proteomes" id="UP000008143">
    <property type="component" value="Chromosome 4"/>
</dbReference>
<dbReference type="Bgee" id="ENSXETG00000022229">
    <property type="expression patterns" value="Expressed in liver and 18 other cell types or tissues"/>
</dbReference>
<dbReference type="GO" id="GO:0005789">
    <property type="term" value="C:endoplasmic reticulum membrane"/>
    <property type="evidence" value="ECO:0007669"/>
    <property type="project" value="UniProtKB-SubCell"/>
</dbReference>
<dbReference type="GO" id="GO:0004303">
    <property type="term" value="F:estradiol 17-beta-dehydrogenase [NAD(P)+] activity"/>
    <property type="evidence" value="ECO:0007669"/>
    <property type="project" value="UniProtKB-EC"/>
</dbReference>
<dbReference type="GO" id="GO:0141040">
    <property type="term" value="F:very-long-chain 3-oxoacyl-CoA reductase activity"/>
    <property type="evidence" value="ECO:0007669"/>
    <property type="project" value="UniProtKB-EC"/>
</dbReference>
<dbReference type="GO" id="GO:0006703">
    <property type="term" value="P:estrogen biosynthetic process"/>
    <property type="evidence" value="ECO:0007669"/>
    <property type="project" value="UniProtKB-UniPathway"/>
</dbReference>
<dbReference type="GO" id="GO:0006633">
    <property type="term" value="P:fatty acid biosynthetic process"/>
    <property type="evidence" value="ECO:0007669"/>
    <property type="project" value="UniProtKB-UniPathway"/>
</dbReference>
<dbReference type="CDD" id="cd05356">
    <property type="entry name" value="17beta-HSD1_like_SDR_c"/>
    <property type="match status" value="1"/>
</dbReference>
<dbReference type="FunFam" id="3.40.50.720:FF:000137">
    <property type="entry name" value="Hydroxysteroid (17-beta) dehydrogenase 3"/>
    <property type="match status" value="1"/>
</dbReference>
<dbReference type="Gene3D" id="3.40.50.720">
    <property type="entry name" value="NAD(P)-binding Rossmann-like Domain"/>
    <property type="match status" value="1"/>
</dbReference>
<dbReference type="InterPro" id="IPR036291">
    <property type="entry name" value="NAD(P)-bd_dom_sf"/>
</dbReference>
<dbReference type="InterPro" id="IPR020904">
    <property type="entry name" value="Sc_DH/Rdtase_CS"/>
</dbReference>
<dbReference type="InterPro" id="IPR002347">
    <property type="entry name" value="SDR_fam"/>
</dbReference>
<dbReference type="InterPro" id="IPR051019">
    <property type="entry name" value="VLCFA-Steroid_DH"/>
</dbReference>
<dbReference type="PANTHER" id="PTHR43899">
    <property type="entry name" value="RH59310P"/>
    <property type="match status" value="1"/>
</dbReference>
<dbReference type="PANTHER" id="PTHR43899:SF14">
    <property type="entry name" value="VERY-LONG-CHAIN 3-OXOACYL-COA REDUCTASE"/>
    <property type="match status" value="1"/>
</dbReference>
<dbReference type="Pfam" id="PF00106">
    <property type="entry name" value="adh_short"/>
    <property type="match status" value="1"/>
</dbReference>
<dbReference type="PIRSF" id="PIRSF000126">
    <property type="entry name" value="11-beta-HSD1"/>
    <property type="match status" value="1"/>
</dbReference>
<dbReference type="PRINTS" id="PR00081">
    <property type="entry name" value="GDHRDH"/>
</dbReference>
<dbReference type="PRINTS" id="PR00080">
    <property type="entry name" value="SDRFAMILY"/>
</dbReference>
<dbReference type="SUPFAM" id="SSF51735">
    <property type="entry name" value="NAD(P)-binding Rossmann-fold domains"/>
    <property type="match status" value="1"/>
</dbReference>
<dbReference type="PROSITE" id="PS00061">
    <property type="entry name" value="ADH_SHORT"/>
    <property type="match status" value="1"/>
</dbReference>
<accession>Q28IU1</accession>
<name>DHB12_XENTR</name>
<gene>
    <name type="primary">hsd17b12</name>
    <name type="ORF">TNeu053h21.1</name>
</gene>
<organism>
    <name type="scientific">Xenopus tropicalis</name>
    <name type="common">Western clawed frog</name>
    <name type="synonym">Silurana tropicalis</name>
    <dbReference type="NCBI Taxonomy" id="8364"/>
    <lineage>
        <taxon>Eukaryota</taxon>
        <taxon>Metazoa</taxon>
        <taxon>Chordata</taxon>
        <taxon>Craniata</taxon>
        <taxon>Vertebrata</taxon>
        <taxon>Euteleostomi</taxon>
        <taxon>Amphibia</taxon>
        <taxon>Batrachia</taxon>
        <taxon>Anura</taxon>
        <taxon>Pipoidea</taxon>
        <taxon>Pipidae</taxon>
        <taxon>Xenopodinae</taxon>
        <taxon>Xenopus</taxon>
        <taxon>Silurana</taxon>
    </lineage>
</organism>
<evidence type="ECO:0000250" key="1"/>
<evidence type="ECO:0000250" key="2">
    <source>
        <dbReference type="UniProtKB" id="Q53GQ0"/>
    </source>
</evidence>
<evidence type="ECO:0000255" key="3"/>
<evidence type="ECO:0000255" key="4">
    <source>
        <dbReference type="PROSITE-ProRule" id="PRU10001"/>
    </source>
</evidence>
<evidence type="ECO:0000305" key="5"/>